<reference key="1">
    <citation type="journal article" date="2007" name="Proc. Natl. Acad. Sci. U.S.A.">
        <title>Genome sequencing and comparative analysis of Saccharomyces cerevisiae strain YJM789.</title>
        <authorList>
            <person name="Wei W."/>
            <person name="McCusker J.H."/>
            <person name="Hyman R.W."/>
            <person name="Jones T."/>
            <person name="Ning Y."/>
            <person name="Cao Z."/>
            <person name="Gu Z."/>
            <person name="Bruno D."/>
            <person name="Miranda M."/>
            <person name="Nguyen M."/>
            <person name="Wilhelmy J."/>
            <person name="Komp C."/>
            <person name="Tamse R."/>
            <person name="Wang X."/>
            <person name="Jia P."/>
            <person name="Luedi P."/>
            <person name="Oefner P.J."/>
            <person name="David L."/>
            <person name="Dietrich F.S."/>
            <person name="Li Y."/>
            <person name="Davis R.W."/>
            <person name="Steinmetz L.M."/>
        </authorList>
    </citation>
    <scope>NUCLEOTIDE SEQUENCE [LARGE SCALE GENOMIC DNA]</scope>
    <source>
        <strain>YJM789</strain>
    </source>
</reference>
<name>YJ00_YEAS7</name>
<sequence>MKLFNKEEASFETLLKRLLVVCESHSRYHGSSLDPMVKVGHEMRKISGYLRCILRKHAANHDGMSLTQSIVNSYKSLFKDAQILDLYHNLLFGCMHLLLDANMSYFRMDSQKLFAVLLFKVYYKLRDIFYVTNEVRLGSLISAFVYKFKSCYDFISCNSLKYGSVRDVISGEVSLINLPPIDSNKVINRAYYRLDVKKLAINNKLVEILELDNGEIAIFEVLSEKMPYTLQTIDNLFQSLALGNHDLMNVGRSLLFRPFRSGDLDLIRLDDSGAKLKVPINNSIVLRLTCKDPIQWQEYWKHVIRKLFDSTATKEYKRSGSKISQQVYVRSNKPDYTSPKRNDDMPISSVKISDTIHNGRTLHRSIPLPGSLSSLIETSNEYPDEESLSIMSERATVSEDSDLDTSLKDIESLSCEKLIELDKSIQVPLSPKYMDTPTLKNIRTASQTFSLESVSPELIESVASEIDDSESIISEDGKDKRDKDLFDPDIDFYKPTLYRRKSSSLLSIFSKNKKNLTIDIPKNHSRSLFSLPGNQQSVTPISASPHDDNVDETYVSFPLSINTSGGAVYFENNSVKVSLWNGKSWVPLSKDMLCLSLILSGDNETLLIIYKDFEREKCKLVVKLEPTWKYNRSTAQDVQLRIPSSDFKASVFGTLHDLTLSIRCAQAAKLVNVLQYQLQSSQTSSLSPSTTTGTLSTVSSSSCFSRNVTRSSTENSELANMKDSSEYISSSLLLSSVKVRQHVKTKADVWKPSRVGYTDIFSQEYKGIVVAIKFVICSDAEGTLYPREYNSRLHDIKRLGRTGLSFTDKKEAYLLEFKNQDVVDHVHKLILPFNTSWQSS</sequence>
<feature type="chain" id="PRO_0000311662" description="UPF0508 protein SCY_2952">
    <location>
        <begin position="1"/>
        <end position="840"/>
    </location>
</feature>
<dbReference type="EMBL" id="AAFW02000040">
    <property type="protein sequence ID" value="EDN63351.1"/>
    <property type="molecule type" value="Genomic_DNA"/>
</dbReference>
<dbReference type="HOGENOM" id="CLU_338632_0_0_1"/>
<dbReference type="OrthoDB" id="7686at4893"/>
<dbReference type="Proteomes" id="UP000007060">
    <property type="component" value="Unassembled WGS sequence"/>
</dbReference>
<gene>
    <name type="ORF">SCY_2952</name>
</gene>
<comment type="similarity">
    <text evidence="1">Belongs to the UPF0508 family.</text>
</comment>
<accession>A6ZPZ1</accession>
<protein>
    <recommendedName>
        <fullName>UPF0508 protein SCY_2952</fullName>
    </recommendedName>
</protein>
<proteinExistence type="inferred from homology"/>
<organism>
    <name type="scientific">Saccharomyces cerevisiae (strain YJM789)</name>
    <name type="common">Baker's yeast</name>
    <dbReference type="NCBI Taxonomy" id="307796"/>
    <lineage>
        <taxon>Eukaryota</taxon>
        <taxon>Fungi</taxon>
        <taxon>Dikarya</taxon>
        <taxon>Ascomycota</taxon>
        <taxon>Saccharomycotina</taxon>
        <taxon>Saccharomycetes</taxon>
        <taxon>Saccharomycetales</taxon>
        <taxon>Saccharomycetaceae</taxon>
        <taxon>Saccharomyces</taxon>
    </lineage>
</organism>
<evidence type="ECO:0000305" key="1"/>